<sequence>MAPAPPPAASFTSAEVQRRLAAGACWVRRGASLYDLTGFVRHHPGGEQLLLARAGQDISADLDGPPHKHSDNARRWLEQYYVGELRADPQDPTENGAGAPAETQKTDAAIEPQFKVVDWDKDLVDWQKPLLWQVGHLGEKYDEWVHQPVARPIRLFHSDLIEAFSKTVWYSVPIIWVPLVLYLSWSYYRTLTQDNIRLFASFTRDYSLVVPESVFIGLFVLGMLIWTLVEYLIHRFLFHMKPPSNSHYLIMLHFVMHGQHHKAPFDGSRLVFPPVPASVVVAFFYVFLRLILPEAVAGILFAGGLLGYVLYDMTHYYLHFGSPHKGSYLYNMKAHHVKHHFEYQKSGFGISTKLWDYFFHTLIPEEADPKMQ</sequence>
<proteinExistence type="evidence at protein level"/>
<name>FA2H_RAT</name>
<gene>
    <name evidence="8 11" type="primary">Fa2h</name>
    <name type="synonym">Faah</name>
</gene>
<accession>Q2LAM0</accession>
<keyword id="KW-0256">Endoplasmic reticulum</keyword>
<keyword id="KW-0275">Fatty acid biosynthesis</keyword>
<keyword id="KW-0276">Fatty acid metabolism</keyword>
<keyword id="KW-0349">Heme</keyword>
<keyword id="KW-0408">Iron</keyword>
<keyword id="KW-0444">Lipid biosynthesis</keyword>
<keyword id="KW-0443">Lipid metabolism</keyword>
<keyword id="KW-0472">Membrane</keyword>
<keyword id="KW-0479">Metal-binding</keyword>
<keyword id="KW-0492">Microsome</keyword>
<keyword id="KW-0560">Oxidoreductase</keyword>
<keyword id="KW-1185">Reference proteome</keyword>
<keyword id="KW-0746">Sphingolipid metabolism</keyword>
<keyword id="KW-0812">Transmembrane</keyword>
<keyword id="KW-1133">Transmembrane helix</keyword>
<keyword id="KW-0862">Zinc</keyword>
<reference key="1">
    <citation type="submission" date="2005-12" db="EMBL/GenBank/DDBJ databases">
        <authorList>
            <person name="Molto E."/>
            <person name="Bonzon-Kulichenko E."/>
            <person name="Gallardo N."/>
            <person name="Andres A."/>
        </authorList>
    </citation>
    <scope>NUCLEOTIDE SEQUENCE [MRNA] OF 1-347</scope>
    <source>
        <strain>Wistar</strain>
    </source>
</reference>
<reference key="2">
    <citation type="journal article" date="2004" name="Genome Res.">
        <title>The status, quality, and expansion of the NIH full-length cDNA project: the Mammalian Gene Collection (MGC).</title>
        <authorList>
            <consortium name="The MGC Project Team"/>
        </authorList>
    </citation>
    <scope>NUCLEOTIDE SEQUENCE [LARGE SCALE MRNA] OF 254-372</scope>
</reference>
<reference key="3">
    <citation type="journal article" date="2006" name="J. Lipid Res.">
        <title>FA2H-dependent fatty acid 2-hydroxylation in postnatal mouse brain.</title>
        <authorList>
            <person name="Alderson N.L."/>
            <person name="Maldonado E.N."/>
            <person name="Kern M.J."/>
            <person name="Bhat N.R."/>
            <person name="Hama H."/>
        </authorList>
    </citation>
    <scope>TISSUE SPECIFICITY</scope>
</reference>
<reference key="4">
    <citation type="journal article" date="2008" name="J. Lipid Res.">
        <title>FA2H is responsible for the formation of 2-hydroxy galactolipids in peripheral nervous system myelin.</title>
        <authorList>
            <person name="Maldonado E.N."/>
            <person name="Alderson N.L."/>
            <person name="Monje P.V."/>
            <person name="Wood P.M."/>
            <person name="Hama H."/>
        </authorList>
    </citation>
    <scope>FUNCTION</scope>
    <scope>INDUCTION</scope>
    <scope>DEVELOPMENTAL STAGE</scope>
    <scope>TISSUE SPECIFICITY</scope>
    <scope>PATHWAY</scope>
    <scope>CATALYTIC ACTIVITY</scope>
</reference>
<feature type="chain" id="PRO_0000312352" description="Fatty acid 2-hydroxylase">
    <location>
        <begin position="1"/>
        <end position="372"/>
    </location>
</feature>
<feature type="transmembrane region" description="Helical" evidence="4">
    <location>
        <begin position="168"/>
        <end position="188"/>
    </location>
</feature>
<feature type="transmembrane region" description="Helical" evidence="4">
    <location>
        <begin position="213"/>
        <end position="233"/>
    </location>
</feature>
<feature type="transmembrane region" description="Helical" evidence="4">
    <location>
        <begin position="268"/>
        <end position="288"/>
    </location>
</feature>
<feature type="transmembrane region" description="Helical" evidence="4">
    <location>
        <begin position="290"/>
        <end position="310"/>
    </location>
</feature>
<feature type="domain" description="Cytochrome b5 heme-binding" evidence="5">
    <location>
        <begin position="8"/>
        <end position="86"/>
    </location>
</feature>
<feature type="domain" description="Fatty acid hydroxylase" evidence="4">
    <location>
        <begin position="219"/>
        <end position="361"/>
    </location>
</feature>
<feature type="binding site" description="axial binding residue" evidence="5">
    <location>
        <position position="43"/>
    </location>
    <ligand>
        <name>heme</name>
        <dbReference type="ChEBI" id="CHEBI:30413"/>
    </ligand>
    <ligandPart>
        <name>Fe</name>
        <dbReference type="ChEBI" id="CHEBI:18248"/>
    </ligandPart>
</feature>
<feature type="binding site" description="axial binding residue" evidence="5">
    <location>
        <position position="69"/>
    </location>
    <ligand>
        <name>heme</name>
        <dbReference type="ChEBI" id="CHEBI:30413"/>
    </ligand>
    <ligandPart>
        <name>Fe</name>
        <dbReference type="ChEBI" id="CHEBI:18248"/>
    </ligandPart>
</feature>
<feature type="binding site" evidence="1">
    <location>
        <position position="234"/>
    </location>
    <ligand>
        <name>Zn(2+)</name>
        <dbReference type="ChEBI" id="CHEBI:29105"/>
        <label>1</label>
    </ligand>
</feature>
<feature type="binding site" evidence="1">
    <location>
        <position position="239"/>
    </location>
    <ligand>
        <name>Zn(2+)</name>
        <dbReference type="ChEBI" id="CHEBI:29105"/>
        <label>1</label>
    </ligand>
</feature>
<feature type="binding site" evidence="1">
    <location>
        <position position="257"/>
    </location>
    <ligand>
        <name>Zn(2+)</name>
        <dbReference type="ChEBI" id="CHEBI:29105"/>
        <label>1</label>
    </ligand>
</feature>
<feature type="binding site" evidence="1">
    <location>
        <position position="260"/>
    </location>
    <ligand>
        <name>Zn(2+)</name>
        <dbReference type="ChEBI" id="CHEBI:29105"/>
        <label>2</label>
    </ligand>
</feature>
<feature type="binding site" evidence="1">
    <location>
        <position position="261"/>
    </location>
    <ligand>
        <name>Zn(2+)</name>
        <dbReference type="ChEBI" id="CHEBI:29105"/>
        <label>1</label>
    </ligand>
</feature>
<feature type="binding site" evidence="1">
    <location>
        <position position="315"/>
    </location>
    <ligand>
        <name>Zn(2+)</name>
        <dbReference type="ChEBI" id="CHEBI:29105"/>
        <label>2</label>
    </ligand>
</feature>
<feature type="binding site" evidence="1">
    <location>
        <position position="319"/>
    </location>
    <ligand>
        <name>Zn(2+)</name>
        <dbReference type="ChEBI" id="CHEBI:29105"/>
        <label>2</label>
    </ligand>
</feature>
<feature type="binding site" evidence="1">
    <location>
        <position position="336"/>
    </location>
    <ligand>
        <name>Zn(2+)</name>
        <dbReference type="ChEBI" id="CHEBI:29105"/>
        <label>2</label>
    </ligand>
</feature>
<feature type="binding site" evidence="1">
    <location>
        <position position="339"/>
    </location>
    <ligand>
        <name>Zn(2+)</name>
        <dbReference type="ChEBI" id="CHEBI:29105"/>
        <label>1</label>
    </ligand>
</feature>
<feature type="binding site" evidence="1">
    <location>
        <position position="340"/>
    </location>
    <ligand>
        <name>Zn(2+)</name>
        <dbReference type="ChEBI" id="CHEBI:29105"/>
        <label>2</label>
    </ligand>
</feature>
<protein>
    <recommendedName>
        <fullName evidence="8">Fatty acid 2-hydroxylase</fullName>
        <ecNumber evidence="3 10">1.14.18.-</ecNumber>
    </recommendedName>
    <alternativeName>
        <fullName evidence="8">Fatty acid alpha-hydroxylase</fullName>
    </alternativeName>
</protein>
<comment type="function">
    <text evidence="2 3 7 10">Catalyzes the hydroxylation of free fatty acids at the C-2 position to produce 2-hydroxy fatty acids, which are building blocks of sphingolipids and glycosphingolipids common in neural tissue and epidermis (Probable). FA2H is stereospecific for the production of (R)-2-hydroxy fatty acids (By similarity). Plays an essential role in the synthesis of galactosphingolipids of the myelin sheath (PubMed:17901466). Responsible for the synthesis of sphingolipids and glycosphingolipids involved in the formation of epidermal lamellar bodies critical for skin permeability barrier (By similarity). Participates in the synthesis of glycosphingolipids and a fraction of type II wax diesters in sebaceous gland, specifically regulating hair follicle homeostasis. Involved in the synthesis of sphingolipids of plasma membrane rafts, controlling lipid raft mobility and trafficking of raft-associated proteins (By similarity).</text>
</comment>
<comment type="catalytic activity">
    <reaction evidence="3 10">
        <text>a 1,2-saturated fatty acid + 2 Fe(II)-[cytochrome b5] + O2 + 2 H(+) = a (R)-2-hydroxy fatty acid + 2 Fe(III)-[cytochrome b5] + H2O</text>
        <dbReference type="Rhea" id="RHEA:38855"/>
        <dbReference type="Rhea" id="RHEA-COMP:10438"/>
        <dbReference type="Rhea" id="RHEA-COMP:10439"/>
        <dbReference type="ChEBI" id="CHEBI:15377"/>
        <dbReference type="ChEBI" id="CHEBI:15378"/>
        <dbReference type="ChEBI" id="CHEBI:15379"/>
        <dbReference type="ChEBI" id="CHEBI:29033"/>
        <dbReference type="ChEBI" id="CHEBI:29034"/>
        <dbReference type="ChEBI" id="CHEBI:76177"/>
        <dbReference type="ChEBI" id="CHEBI:83955"/>
    </reaction>
    <physiologicalReaction direction="left-to-right" evidence="3">
        <dbReference type="Rhea" id="RHEA:38856"/>
    </physiologicalReaction>
</comment>
<comment type="catalytic activity">
    <reaction evidence="3">
        <text>hexadecanoate + 2 Fe(II)-[cytochrome b5] + O2 + 2 H(+) = (R)-2-hydroxyhexadecanoate + 2 Fe(III)-[cytochrome b5] + H2O</text>
        <dbReference type="Rhea" id="RHEA:38551"/>
        <dbReference type="Rhea" id="RHEA-COMP:10438"/>
        <dbReference type="Rhea" id="RHEA-COMP:10439"/>
        <dbReference type="ChEBI" id="CHEBI:7896"/>
        <dbReference type="ChEBI" id="CHEBI:15377"/>
        <dbReference type="ChEBI" id="CHEBI:15378"/>
        <dbReference type="ChEBI" id="CHEBI:15379"/>
        <dbReference type="ChEBI" id="CHEBI:29033"/>
        <dbReference type="ChEBI" id="CHEBI:29034"/>
        <dbReference type="ChEBI" id="CHEBI:75927"/>
    </reaction>
    <physiologicalReaction direction="left-to-right" evidence="3">
        <dbReference type="Rhea" id="RHEA:38552"/>
    </physiologicalReaction>
</comment>
<comment type="catalytic activity">
    <reaction evidence="3">
        <text>octadecanoate + 2 Fe(II)-[cytochrome b5] + O2 + 2 H(+) = (R)-2-hydroxyoctadecanoate + 2 Fe(III)-[cytochrome b5] + H2O</text>
        <dbReference type="Rhea" id="RHEA:39815"/>
        <dbReference type="Rhea" id="RHEA-COMP:10438"/>
        <dbReference type="Rhea" id="RHEA-COMP:10439"/>
        <dbReference type="ChEBI" id="CHEBI:15377"/>
        <dbReference type="ChEBI" id="CHEBI:15378"/>
        <dbReference type="ChEBI" id="CHEBI:15379"/>
        <dbReference type="ChEBI" id="CHEBI:25629"/>
        <dbReference type="ChEBI" id="CHEBI:29033"/>
        <dbReference type="ChEBI" id="CHEBI:29034"/>
        <dbReference type="ChEBI" id="CHEBI:57562"/>
    </reaction>
    <physiologicalReaction direction="left-to-right" evidence="3">
        <dbReference type="Rhea" id="RHEA:39816"/>
    </physiologicalReaction>
</comment>
<comment type="catalytic activity">
    <reaction evidence="3">
        <text>docosanoate + 2 Fe(II)-[cytochrome b5] + O2 + 2 H(+) = 2-hydroxydocosanoate + 2 Fe(III)-[cytochrome b5] + H2O</text>
        <dbReference type="Rhea" id="RHEA:39819"/>
        <dbReference type="Rhea" id="RHEA-COMP:10438"/>
        <dbReference type="Rhea" id="RHEA-COMP:10439"/>
        <dbReference type="ChEBI" id="CHEBI:15377"/>
        <dbReference type="ChEBI" id="CHEBI:15378"/>
        <dbReference type="ChEBI" id="CHEBI:15379"/>
        <dbReference type="ChEBI" id="CHEBI:23858"/>
        <dbReference type="ChEBI" id="CHEBI:29033"/>
        <dbReference type="ChEBI" id="CHEBI:29034"/>
        <dbReference type="ChEBI" id="CHEBI:76722"/>
    </reaction>
    <physiologicalReaction direction="left-to-right" evidence="3">
        <dbReference type="Rhea" id="RHEA:39820"/>
    </physiologicalReaction>
</comment>
<comment type="catalytic activity">
    <reaction evidence="3 10">
        <text>tetracosanoate + 2 Fe(II)-[cytochrome b5] + O2 + 2 H(+) = (R)-2-hydroxytetracosanoate + 2 Fe(III)-[cytochrome b5] + H2O</text>
        <dbReference type="Rhea" id="RHEA:38559"/>
        <dbReference type="Rhea" id="RHEA-COMP:10438"/>
        <dbReference type="Rhea" id="RHEA-COMP:10439"/>
        <dbReference type="ChEBI" id="CHEBI:15377"/>
        <dbReference type="ChEBI" id="CHEBI:15378"/>
        <dbReference type="ChEBI" id="CHEBI:15379"/>
        <dbReference type="ChEBI" id="CHEBI:29033"/>
        <dbReference type="ChEBI" id="CHEBI:29034"/>
        <dbReference type="ChEBI" id="CHEBI:31014"/>
        <dbReference type="ChEBI" id="CHEBI:75935"/>
    </reaction>
    <physiologicalReaction direction="left-to-right" evidence="3 10">
        <dbReference type="Rhea" id="RHEA:38560"/>
    </physiologicalReaction>
</comment>
<comment type="cofactor">
    <cofactor evidence="1">
        <name>Zn(2+)</name>
        <dbReference type="ChEBI" id="CHEBI:29105"/>
    </cofactor>
    <text evidence="1">Binds 2 Zn(2+) ions per subunit that likely form a catalytic dimetal center.</text>
</comment>
<comment type="pathway">
    <text evidence="7">Lipid metabolism; fatty acid metabolism.</text>
</comment>
<comment type="pathway">
    <text evidence="7">Sphingolipid metabolism; galactosylceramide biosynthesis.</text>
</comment>
<comment type="subcellular location">
    <subcellularLocation>
        <location evidence="3">Endoplasmic reticulum membrane</location>
        <topology evidence="3">Multi-pass membrane protein</topology>
    </subcellularLocation>
    <subcellularLocation>
        <location evidence="3">Microsome membrane</location>
        <topology evidence="3">Multi-pass membrane protein</topology>
    </subcellularLocation>
</comment>
<comment type="tissue specificity">
    <text evidence="6 7">Detected in oligodendrocytes (at protein level). Detected in sciatic nerve.</text>
</comment>
<comment type="developmental stage">
    <text evidence="7">Detected at low levels in sciatic nerve from newborns. Levels increase strongly during the first 3 weeks, and decrease thereafter to reach a low, constitutive level in 4 week olds. Expressed at a low, constitutive level in adults.</text>
</comment>
<comment type="induction">
    <text evidence="7">Up-regulated in sciatic nerve during myelination. Up-regulated in differentiating cultured Schwann cells.</text>
</comment>
<comment type="domain">
    <text>The histidine box domains may contain the active site and/or be involved in metal ion binding.</text>
</comment>
<comment type="domain">
    <text evidence="3">The N-terminal cytochrome b5 heme-binding domain is essential for catalytic activity.</text>
</comment>
<comment type="similarity">
    <text evidence="9">Belongs to the sterol desaturase family. SCS7 subfamily.</text>
</comment>
<organism>
    <name type="scientific">Rattus norvegicus</name>
    <name type="common">Rat</name>
    <dbReference type="NCBI Taxonomy" id="10116"/>
    <lineage>
        <taxon>Eukaryota</taxon>
        <taxon>Metazoa</taxon>
        <taxon>Chordata</taxon>
        <taxon>Craniata</taxon>
        <taxon>Vertebrata</taxon>
        <taxon>Euteleostomi</taxon>
        <taxon>Mammalia</taxon>
        <taxon>Eutheria</taxon>
        <taxon>Euarchontoglires</taxon>
        <taxon>Glires</taxon>
        <taxon>Rodentia</taxon>
        <taxon>Myomorpha</taxon>
        <taxon>Muroidea</taxon>
        <taxon>Muridae</taxon>
        <taxon>Murinae</taxon>
        <taxon>Rattus</taxon>
    </lineage>
</organism>
<dbReference type="EC" id="1.14.18.-" evidence="3 10"/>
<dbReference type="EMBL" id="DQ339484">
    <property type="protein sequence ID" value="ABC71132.1"/>
    <property type="molecule type" value="mRNA"/>
</dbReference>
<dbReference type="EMBL" id="CO396956">
    <property type="status" value="NOT_ANNOTATED_CDS"/>
    <property type="molecule type" value="mRNA"/>
</dbReference>
<dbReference type="RefSeq" id="NP_001129055.1">
    <property type="nucleotide sequence ID" value="NM_001135583.1"/>
</dbReference>
<dbReference type="SMR" id="Q2LAM0"/>
<dbReference type="FunCoup" id="Q2LAM0">
    <property type="interactions" value="120"/>
</dbReference>
<dbReference type="STRING" id="10116.ENSRNOP00000025625"/>
<dbReference type="SwissLipids" id="SLP:000001975"/>
<dbReference type="PhosphoSitePlus" id="Q2LAM0"/>
<dbReference type="PaxDb" id="10116-ENSRNOP00000025625"/>
<dbReference type="Ensembl" id="ENSRNOT00000025625.7">
    <property type="protein sequence ID" value="ENSRNOP00000025625.5"/>
    <property type="gene ID" value="ENSRNOG00000018950.8"/>
</dbReference>
<dbReference type="GeneID" id="307855"/>
<dbReference type="KEGG" id="rno:307855"/>
<dbReference type="UCSC" id="RGD:1310347">
    <property type="organism name" value="rat"/>
</dbReference>
<dbReference type="AGR" id="RGD:1310347"/>
<dbReference type="CTD" id="79152"/>
<dbReference type="RGD" id="1310347">
    <property type="gene designation" value="Fa2h"/>
</dbReference>
<dbReference type="eggNOG" id="KOG0537">
    <property type="taxonomic scope" value="Eukaryota"/>
</dbReference>
<dbReference type="eggNOG" id="KOG0539">
    <property type="taxonomic scope" value="Eukaryota"/>
</dbReference>
<dbReference type="GeneTree" id="ENSGT00390000002142"/>
<dbReference type="HOGENOM" id="CLU_034756_2_0_1"/>
<dbReference type="InParanoid" id="Q2LAM0"/>
<dbReference type="OMA" id="WTIIEYV"/>
<dbReference type="OrthoDB" id="2204368at2759"/>
<dbReference type="PhylomeDB" id="Q2LAM0"/>
<dbReference type="TreeFam" id="TF314955"/>
<dbReference type="Reactome" id="R-RNO-1660661">
    <property type="pathway name" value="Sphingolipid de novo biosynthesis"/>
</dbReference>
<dbReference type="UniPathway" id="UPA00199"/>
<dbReference type="UniPathway" id="UPA00787"/>
<dbReference type="PRO" id="PR:Q2LAM0"/>
<dbReference type="Proteomes" id="UP000002494">
    <property type="component" value="Chromosome 19"/>
</dbReference>
<dbReference type="Bgee" id="ENSRNOG00000018950">
    <property type="expression patterns" value="Expressed in stomach and 9 other cell types or tissues"/>
</dbReference>
<dbReference type="GO" id="GO:0005783">
    <property type="term" value="C:endoplasmic reticulum"/>
    <property type="evidence" value="ECO:0000266"/>
    <property type="project" value="RGD"/>
</dbReference>
<dbReference type="GO" id="GO:0005789">
    <property type="term" value="C:endoplasmic reticulum membrane"/>
    <property type="evidence" value="ECO:0007669"/>
    <property type="project" value="UniProtKB-SubCell"/>
</dbReference>
<dbReference type="GO" id="GO:0016020">
    <property type="term" value="C:membrane"/>
    <property type="evidence" value="ECO:0000250"/>
    <property type="project" value="UniProtKB"/>
</dbReference>
<dbReference type="GO" id="GO:0120521">
    <property type="term" value="F:4-hydroxysphinganine ceramide fatty acyl 2-hydroxylase activity"/>
    <property type="evidence" value="ECO:0000266"/>
    <property type="project" value="RGD"/>
</dbReference>
<dbReference type="GO" id="GO:0080132">
    <property type="term" value="F:fatty acid 2-hydroxylase activity"/>
    <property type="evidence" value="ECO:0000315"/>
    <property type="project" value="UniProtKB"/>
</dbReference>
<dbReference type="GO" id="GO:0120520">
    <property type="term" value="F:free fatty acid 2-hydroxylase activity"/>
    <property type="evidence" value="ECO:0000266"/>
    <property type="project" value="RGD"/>
</dbReference>
<dbReference type="GO" id="GO:0020037">
    <property type="term" value="F:heme binding"/>
    <property type="evidence" value="ECO:0007669"/>
    <property type="project" value="InterPro"/>
</dbReference>
<dbReference type="GO" id="GO:0005506">
    <property type="term" value="F:iron ion binding"/>
    <property type="evidence" value="ECO:0007669"/>
    <property type="project" value="InterPro"/>
</dbReference>
<dbReference type="GO" id="GO:0032286">
    <property type="term" value="P:central nervous system myelin maintenance"/>
    <property type="evidence" value="ECO:0000266"/>
    <property type="project" value="RGD"/>
</dbReference>
<dbReference type="GO" id="GO:0046513">
    <property type="term" value="P:ceramide biosynthetic process"/>
    <property type="evidence" value="ECO:0000250"/>
    <property type="project" value="UniProtKB"/>
</dbReference>
<dbReference type="GO" id="GO:0061436">
    <property type="term" value="P:establishment of skin barrier"/>
    <property type="evidence" value="ECO:0000250"/>
    <property type="project" value="UniProtKB"/>
</dbReference>
<dbReference type="GO" id="GO:0006633">
    <property type="term" value="P:fatty acid biosynthetic process"/>
    <property type="evidence" value="ECO:0007669"/>
    <property type="project" value="UniProtKB-KW"/>
</dbReference>
<dbReference type="GO" id="GO:0006631">
    <property type="term" value="P:fatty acid metabolic process"/>
    <property type="evidence" value="ECO:0000266"/>
    <property type="project" value="RGD"/>
</dbReference>
<dbReference type="GO" id="GO:0006682">
    <property type="term" value="P:galactosylceramide biosynthetic process"/>
    <property type="evidence" value="ECO:0000315"/>
    <property type="project" value="UniProtKB"/>
</dbReference>
<dbReference type="GO" id="GO:0006679">
    <property type="term" value="P:glucosylceramide biosynthetic process"/>
    <property type="evidence" value="ECO:0000250"/>
    <property type="project" value="UniProtKB"/>
</dbReference>
<dbReference type="GO" id="GO:0030258">
    <property type="term" value="P:lipid modification"/>
    <property type="evidence" value="ECO:0000266"/>
    <property type="project" value="RGD"/>
</dbReference>
<dbReference type="GO" id="GO:0032287">
    <property type="term" value="P:peripheral nervous system myelin maintenance"/>
    <property type="evidence" value="ECO:0000266"/>
    <property type="project" value="RGD"/>
</dbReference>
<dbReference type="GO" id="GO:0044857">
    <property type="term" value="P:plasma membrane raft organization"/>
    <property type="evidence" value="ECO:0000250"/>
    <property type="project" value="UniProtKB"/>
</dbReference>
<dbReference type="GO" id="GO:1904697">
    <property type="term" value="P:regulation of acinar cell proliferation"/>
    <property type="evidence" value="ECO:0000266"/>
    <property type="project" value="RGD"/>
</dbReference>
<dbReference type="GO" id="GO:0042634">
    <property type="term" value="P:regulation of hair cycle"/>
    <property type="evidence" value="ECO:0000266"/>
    <property type="project" value="RGD"/>
</dbReference>
<dbReference type="GO" id="GO:1904002">
    <property type="term" value="P:regulation of sebum secreting cell proliferation"/>
    <property type="evidence" value="ECO:0000266"/>
    <property type="project" value="RGD"/>
</dbReference>
<dbReference type="GO" id="GO:0001949">
    <property type="term" value="P:sebaceous gland cell differentiation"/>
    <property type="evidence" value="ECO:0000266"/>
    <property type="project" value="RGD"/>
</dbReference>
<dbReference type="FunFam" id="3.10.120.10:FF:000011">
    <property type="entry name" value="Fatty acid 2-hydroxylase"/>
    <property type="match status" value="1"/>
</dbReference>
<dbReference type="Gene3D" id="3.10.120.10">
    <property type="entry name" value="Cytochrome b5-like heme/steroid binding domain"/>
    <property type="match status" value="1"/>
</dbReference>
<dbReference type="InterPro" id="IPR001199">
    <property type="entry name" value="Cyt_B5-like_heme/steroid-bd"/>
</dbReference>
<dbReference type="InterPro" id="IPR036400">
    <property type="entry name" value="Cyt_B5-like_heme/steroid_sf"/>
</dbReference>
<dbReference type="InterPro" id="IPR018506">
    <property type="entry name" value="Cyt_B5_heme-BS"/>
</dbReference>
<dbReference type="InterPro" id="IPR006694">
    <property type="entry name" value="Fatty_acid_hydroxylase"/>
</dbReference>
<dbReference type="InterPro" id="IPR014430">
    <property type="entry name" value="Scs7"/>
</dbReference>
<dbReference type="PANTHER" id="PTHR12863:SF1">
    <property type="entry name" value="FATTY ACID 2-HYDROXYLASE"/>
    <property type="match status" value="1"/>
</dbReference>
<dbReference type="PANTHER" id="PTHR12863">
    <property type="entry name" value="FATTY ACID HYDROXYLASE"/>
    <property type="match status" value="1"/>
</dbReference>
<dbReference type="Pfam" id="PF00173">
    <property type="entry name" value="Cyt-b5"/>
    <property type="match status" value="1"/>
</dbReference>
<dbReference type="Pfam" id="PF04116">
    <property type="entry name" value="FA_hydroxylase"/>
    <property type="match status" value="1"/>
</dbReference>
<dbReference type="PIRSF" id="PIRSF005149">
    <property type="entry name" value="IPC-B_HD"/>
    <property type="match status" value="1"/>
</dbReference>
<dbReference type="PRINTS" id="PR00363">
    <property type="entry name" value="CYTOCHROMEB5"/>
</dbReference>
<dbReference type="SMART" id="SM01117">
    <property type="entry name" value="Cyt-b5"/>
    <property type="match status" value="1"/>
</dbReference>
<dbReference type="SUPFAM" id="SSF55856">
    <property type="entry name" value="Cytochrome b5-like heme/steroid binding domain"/>
    <property type="match status" value="1"/>
</dbReference>
<dbReference type="PROSITE" id="PS00191">
    <property type="entry name" value="CYTOCHROME_B5_1"/>
    <property type="match status" value="1"/>
</dbReference>
<dbReference type="PROSITE" id="PS50255">
    <property type="entry name" value="CYTOCHROME_B5_2"/>
    <property type="match status" value="1"/>
</dbReference>
<evidence type="ECO:0000250" key="1">
    <source>
        <dbReference type="UniProtKB" id="Q03529"/>
    </source>
</evidence>
<evidence type="ECO:0000250" key="2">
    <source>
        <dbReference type="UniProtKB" id="Q5MPP0"/>
    </source>
</evidence>
<evidence type="ECO:0000250" key="3">
    <source>
        <dbReference type="UniProtKB" id="Q7L5A8"/>
    </source>
</evidence>
<evidence type="ECO:0000255" key="4"/>
<evidence type="ECO:0000255" key="5">
    <source>
        <dbReference type="PROSITE-ProRule" id="PRU00279"/>
    </source>
</evidence>
<evidence type="ECO:0000269" key="6">
    <source>
    </source>
</evidence>
<evidence type="ECO:0000269" key="7">
    <source>
    </source>
</evidence>
<evidence type="ECO:0000303" key="8">
    <source>
    </source>
</evidence>
<evidence type="ECO:0000305" key="9"/>
<evidence type="ECO:0000305" key="10">
    <source>
    </source>
</evidence>
<evidence type="ECO:0000312" key="11">
    <source>
        <dbReference type="RGD" id="1310347"/>
    </source>
</evidence>